<reference key="1">
    <citation type="journal article" date="2003" name="Genome Res.">
        <title>Comparative complete genome sequence analysis of the amino acid replacements responsible for the thermostability of Corynebacterium efficiens.</title>
        <authorList>
            <person name="Nishio Y."/>
            <person name="Nakamura Y."/>
            <person name="Kawarabayasi Y."/>
            <person name="Usuda Y."/>
            <person name="Kimura E."/>
            <person name="Sugimoto S."/>
            <person name="Matsui K."/>
            <person name="Yamagishi A."/>
            <person name="Kikuchi H."/>
            <person name="Ikeo K."/>
            <person name="Gojobori T."/>
        </authorList>
    </citation>
    <scope>NUCLEOTIDE SEQUENCE [LARGE SCALE GENOMIC DNA]</scope>
    <source>
        <strain>DSM 44549 / YS-314 / AJ 12310 / JCM 11189 / NBRC 100395</strain>
    </source>
</reference>
<dbReference type="EMBL" id="BA000035">
    <property type="protein sequence ID" value="BAC16841.1"/>
    <property type="status" value="ALT_INIT"/>
    <property type="molecule type" value="Genomic_DNA"/>
</dbReference>
<dbReference type="RefSeq" id="WP_011074778.1">
    <property type="nucleotide sequence ID" value="NC_004369.1"/>
</dbReference>
<dbReference type="SMR" id="Q8FUI7"/>
<dbReference type="STRING" id="196164.gene:10740420"/>
<dbReference type="KEGG" id="cef:CE0031"/>
<dbReference type="eggNOG" id="ENOG5032ZHR">
    <property type="taxonomic scope" value="Bacteria"/>
</dbReference>
<dbReference type="HOGENOM" id="CLU_149126_1_1_11"/>
<dbReference type="OrthoDB" id="5189646at2"/>
<dbReference type="Proteomes" id="UP000001409">
    <property type="component" value="Chromosome"/>
</dbReference>
<dbReference type="GO" id="GO:0005886">
    <property type="term" value="C:plasma membrane"/>
    <property type="evidence" value="ECO:0007669"/>
    <property type="project" value="UniProtKB-SubCell"/>
</dbReference>
<dbReference type="GO" id="GO:0051301">
    <property type="term" value="P:cell division"/>
    <property type="evidence" value="ECO:0007669"/>
    <property type="project" value="UniProtKB-UniRule"/>
</dbReference>
<dbReference type="HAMAP" id="MF_00631">
    <property type="entry name" value="CrgA"/>
    <property type="match status" value="1"/>
</dbReference>
<dbReference type="InterPro" id="IPR009619">
    <property type="entry name" value="CrgA"/>
</dbReference>
<dbReference type="NCBIfam" id="NF001194">
    <property type="entry name" value="PRK00159.1"/>
    <property type="match status" value="1"/>
</dbReference>
<dbReference type="Pfam" id="PF06781">
    <property type="entry name" value="CrgA"/>
    <property type="match status" value="1"/>
</dbReference>
<gene>
    <name evidence="1" type="primary">crgA</name>
    <name type="ordered locus">CE0031</name>
</gene>
<sequence length="90" mass="10005">MPKAKVTKNSIAPVSSNPSANRTPVKINSTGTPMWYKVIMFAFMLVGLLWLVANYLVGPQIPFMNELDAWNYGIGFGLLIIGLLMTMGWR</sequence>
<evidence type="ECO:0000255" key="1">
    <source>
        <dbReference type="HAMAP-Rule" id="MF_00631"/>
    </source>
</evidence>
<evidence type="ECO:0000256" key="2">
    <source>
        <dbReference type="SAM" id="MobiDB-lite"/>
    </source>
</evidence>
<evidence type="ECO:0000305" key="3"/>
<comment type="function">
    <text evidence="1">Involved in cell division.</text>
</comment>
<comment type="subcellular location">
    <subcellularLocation>
        <location evidence="1">Cell membrane</location>
        <topology evidence="1">Multi-pass membrane protein</topology>
    </subcellularLocation>
</comment>
<comment type="similarity">
    <text evidence="1">Belongs to the CrgA family.</text>
</comment>
<comment type="sequence caution" evidence="3">
    <conflict type="erroneous initiation">
        <sequence resource="EMBL-CDS" id="BAC16841"/>
    </conflict>
</comment>
<name>CRGA_COREF</name>
<proteinExistence type="inferred from homology"/>
<organism>
    <name type="scientific">Corynebacterium efficiens (strain DSM 44549 / YS-314 / AJ 12310 / JCM 11189 / NBRC 100395)</name>
    <dbReference type="NCBI Taxonomy" id="196164"/>
    <lineage>
        <taxon>Bacteria</taxon>
        <taxon>Bacillati</taxon>
        <taxon>Actinomycetota</taxon>
        <taxon>Actinomycetes</taxon>
        <taxon>Mycobacteriales</taxon>
        <taxon>Corynebacteriaceae</taxon>
        <taxon>Corynebacterium</taxon>
    </lineage>
</organism>
<keyword id="KW-0131">Cell cycle</keyword>
<keyword id="KW-0132">Cell division</keyword>
<keyword id="KW-1003">Cell membrane</keyword>
<keyword id="KW-0472">Membrane</keyword>
<keyword id="KW-1185">Reference proteome</keyword>
<keyword id="KW-0812">Transmembrane</keyword>
<keyword id="KW-1133">Transmembrane helix</keyword>
<protein>
    <recommendedName>
        <fullName evidence="1">Cell division protein CrgA</fullName>
    </recommendedName>
</protein>
<accession>Q8FUI7</accession>
<feature type="chain" id="PRO_0000216811" description="Cell division protein CrgA">
    <location>
        <begin position="1"/>
        <end position="90"/>
    </location>
</feature>
<feature type="transmembrane region" description="Helical" evidence="1">
    <location>
        <begin position="38"/>
        <end position="58"/>
    </location>
</feature>
<feature type="transmembrane region" description="Helical" evidence="1">
    <location>
        <begin position="69"/>
        <end position="89"/>
    </location>
</feature>
<feature type="region of interest" description="Disordered" evidence="2">
    <location>
        <begin position="1"/>
        <end position="26"/>
    </location>
</feature>
<feature type="compositionally biased region" description="Polar residues" evidence="2">
    <location>
        <begin position="7"/>
        <end position="26"/>
    </location>
</feature>